<protein>
    <recommendedName>
        <fullName evidence="1">Adenylosuccinate synthetase</fullName>
        <shortName evidence="1">AMPSase</shortName>
        <shortName evidence="1">AdSS</shortName>
        <ecNumber evidence="1">6.3.4.4</ecNumber>
    </recommendedName>
    <alternativeName>
        <fullName evidence="1">IMP--aspartate ligase</fullName>
    </alternativeName>
</protein>
<reference key="1">
    <citation type="submission" date="2009-01" db="EMBL/GenBank/DDBJ databases">
        <title>Complete sequence of chromosome of Caldicellulosiruptor becscii DSM 6725.</title>
        <authorList>
            <person name="Lucas S."/>
            <person name="Copeland A."/>
            <person name="Lapidus A."/>
            <person name="Glavina del Rio T."/>
            <person name="Tice H."/>
            <person name="Bruce D."/>
            <person name="Goodwin L."/>
            <person name="Pitluck S."/>
            <person name="Sims D."/>
            <person name="Meincke L."/>
            <person name="Brettin T."/>
            <person name="Detter J.C."/>
            <person name="Han C."/>
            <person name="Larimer F."/>
            <person name="Land M."/>
            <person name="Hauser L."/>
            <person name="Kyrpides N."/>
            <person name="Ovchinnikova G."/>
            <person name="Kataeva I."/>
            <person name="Adams M.W.W."/>
        </authorList>
    </citation>
    <scope>NUCLEOTIDE SEQUENCE [LARGE SCALE GENOMIC DNA]</scope>
    <source>
        <strain>ATCC BAA-1888 / DSM 6725 / KCTC 15123 / Z-1320</strain>
    </source>
</reference>
<sequence>MQQIRAIVGTQWGDEGKGKIVDFLAKEADVVVRAQGGNNAGHTVEAFGKVFKLHLIPSGILYKDKLNIIGNGVVIDPESLIQEIESLEKEGISTENLKISDRAHLVMPYHKILDEEQERLRGEESLGTTKRGIGPAYTDKTERTNLRVCDMLDEEEFVQKLRTVYERKNQILTHVYHKTPMKFGELLEQFMKYGEILKPYITDTIKLLNDSIKAGKKVLLEGAQATMLDLDYGTYPYVTSSHPTVGGFCIGAGIAPKYIQEVIGVVKAYTTRVGKGPFPTELLDEIGNSIREKGREYGTTTGRPRRCGWLDLVVVRYAVLINGIDKIALTKLDTLSGLPKIKVCVGYKYEGKVLDLFPASLRVARECEPVYEEFEGWSEEEIKAAKEYEALPKSAKRYIEFIEKETGAKVFLIGTGPAREDIIIKD</sequence>
<keyword id="KW-0963">Cytoplasm</keyword>
<keyword id="KW-0342">GTP-binding</keyword>
<keyword id="KW-0436">Ligase</keyword>
<keyword id="KW-0460">Magnesium</keyword>
<keyword id="KW-0479">Metal-binding</keyword>
<keyword id="KW-0547">Nucleotide-binding</keyword>
<keyword id="KW-0658">Purine biosynthesis</keyword>
<organism>
    <name type="scientific">Caldicellulosiruptor bescii (strain ATCC BAA-1888 / DSM 6725 / KCTC 15123 / Z-1320)</name>
    <name type="common">Anaerocellum thermophilum</name>
    <dbReference type="NCBI Taxonomy" id="521460"/>
    <lineage>
        <taxon>Bacteria</taxon>
        <taxon>Bacillati</taxon>
        <taxon>Bacillota</taxon>
        <taxon>Bacillota incertae sedis</taxon>
        <taxon>Caldicellulosiruptorales</taxon>
        <taxon>Caldicellulosiruptoraceae</taxon>
        <taxon>Caldicellulosiruptor</taxon>
    </lineage>
</organism>
<proteinExistence type="inferred from homology"/>
<feature type="chain" id="PRO_1000116450" description="Adenylosuccinate synthetase">
    <location>
        <begin position="1"/>
        <end position="426"/>
    </location>
</feature>
<feature type="active site" description="Proton acceptor" evidence="1">
    <location>
        <position position="14"/>
    </location>
</feature>
<feature type="active site" description="Proton donor" evidence="1">
    <location>
        <position position="42"/>
    </location>
</feature>
<feature type="binding site" evidence="1">
    <location>
        <begin position="13"/>
        <end position="19"/>
    </location>
    <ligand>
        <name>GTP</name>
        <dbReference type="ChEBI" id="CHEBI:37565"/>
    </ligand>
</feature>
<feature type="binding site" description="in other chain" evidence="1">
    <location>
        <begin position="14"/>
        <end position="17"/>
    </location>
    <ligand>
        <name>IMP</name>
        <dbReference type="ChEBI" id="CHEBI:58053"/>
        <note>ligand shared between dimeric partners</note>
    </ligand>
</feature>
<feature type="binding site" evidence="1">
    <location>
        <position position="14"/>
    </location>
    <ligand>
        <name>Mg(2+)</name>
        <dbReference type="ChEBI" id="CHEBI:18420"/>
    </ligand>
</feature>
<feature type="binding site" description="in other chain" evidence="1">
    <location>
        <begin position="39"/>
        <end position="42"/>
    </location>
    <ligand>
        <name>IMP</name>
        <dbReference type="ChEBI" id="CHEBI:58053"/>
        <note>ligand shared between dimeric partners</note>
    </ligand>
</feature>
<feature type="binding site" evidence="1">
    <location>
        <begin position="41"/>
        <end position="43"/>
    </location>
    <ligand>
        <name>GTP</name>
        <dbReference type="ChEBI" id="CHEBI:37565"/>
    </ligand>
</feature>
<feature type="binding site" evidence="1">
    <location>
        <position position="41"/>
    </location>
    <ligand>
        <name>Mg(2+)</name>
        <dbReference type="ChEBI" id="CHEBI:18420"/>
    </ligand>
</feature>
<feature type="binding site" description="in other chain" evidence="1">
    <location>
        <position position="129"/>
    </location>
    <ligand>
        <name>IMP</name>
        <dbReference type="ChEBI" id="CHEBI:58053"/>
        <note>ligand shared between dimeric partners</note>
    </ligand>
</feature>
<feature type="binding site" evidence="1">
    <location>
        <position position="143"/>
    </location>
    <ligand>
        <name>IMP</name>
        <dbReference type="ChEBI" id="CHEBI:58053"/>
        <note>ligand shared between dimeric partners</note>
    </ligand>
</feature>
<feature type="binding site" description="in other chain" evidence="1">
    <location>
        <position position="224"/>
    </location>
    <ligand>
        <name>IMP</name>
        <dbReference type="ChEBI" id="CHEBI:58053"/>
        <note>ligand shared between dimeric partners</note>
    </ligand>
</feature>
<feature type="binding site" description="in other chain" evidence="1">
    <location>
        <position position="239"/>
    </location>
    <ligand>
        <name>IMP</name>
        <dbReference type="ChEBI" id="CHEBI:58053"/>
        <note>ligand shared between dimeric partners</note>
    </ligand>
</feature>
<feature type="binding site" evidence="1">
    <location>
        <begin position="299"/>
        <end position="305"/>
    </location>
    <ligand>
        <name>substrate</name>
    </ligand>
</feature>
<feature type="binding site" description="in other chain" evidence="1">
    <location>
        <position position="303"/>
    </location>
    <ligand>
        <name>IMP</name>
        <dbReference type="ChEBI" id="CHEBI:58053"/>
        <note>ligand shared between dimeric partners</note>
    </ligand>
</feature>
<feature type="binding site" evidence="1">
    <location>
        <position position="305"/>
    </location>
    <ligand>
        <name>GTP</name>
        <dbReference type="ChEBI" id="CHEBI:37565"/>
    </ligand>
</feature>
<feature type="binding site" evidence="1">
    <location>
        <begin position="331"/>
        <end position="333"/>
    </location>
    <ligand>
        <name>GTP</name>
        <dbReference type="ChEBI" id="CHEBI:37565"/>
    </ligand>
</feature>
<feature type="binding site" evidence="1">
    <location>
        <begin position="414"/>
        <end position="416"/>
    </location>
    <ligand>
        <name>GTP</name>
        <dbReference type="ChEBI" id="CHEBI:37565"/>
    </ligand>
</feature>
<evidence type="ECO:0000255" key="1">
    <source>
        <dbReference type="HAMAP-Rule" id="MF_00011"/>
    </source>
</evidence>
<comment type="function">
    <text evidence="1">Plays an important role in the de novo pathway of purine nucleotide biosynthesis. Catalyzes the first committed step in the biosynthesis of AMP from IMP.</text>
</comment>
<comment type="catalytic activity">
    <reaction evidence="1">
        <text>IMP + L-aspartate + GTP = N(6)-(1,2-dicarboxyethyl)-AMP + GDP + phosphate + 2 H(+)</text>
        <dbReference type="Rhea" id="RHEA:15753"/>
        <dbReference type="ChEBI" id="CHEBI:15378"/>
        <dbReference type="ChEBI" id="CHEBI:29991"/>
        <dbReference type="ChEBI" id="CHEBI:37565"/>
        <dbReference type="ChEBI" id="CHEBI:43474"/>
        <dbReference type="ChEBI" id="CHEBI:57567"/>
        <dbReference type="ChEBI" id="CHEBI:58053"/>
        <dbReference type="ChEBI" id="CHEBI:58189"/>
        <dbReference type="EC" id="6.3.4.4"/>
    </reaction>
</comment>
<comment type="cofactor">
    <cofactor evidence="1">
        <name>Mg(2+)</name>
        <dbReference type="ChEBI" id="CHEBI:18420"/>
    </cofactor>
    <text evidence="1">Binds 1 Mg(2+) ion per subunit.</text>
</comment>
<comment type="pathway">
    <text evidence="1">Purine metabolism; AMP biosynthesis via de novo pathway; AMP from IMP: step 1/2.</text>
</comment>
<comment type="subunit">
    <text evidence="1">Homodimer.</text>
</comment>
<comment type="subcellular location">
    <subcellularLocation>
        <location evidence="1">Cytoplasm</location>
    </subcellularLocation>
</comment>
<comment type="similarity">
    <text evidence="1">Belongs to the adenylosuccinate synthetase family.</text>
</comment>
<name>PURA_CALBD</name>
<dbReference type="EC" id="6.3.4.4" evidence="1"/>
<dbReference type="EMBL" id="CP001393">
    <property type="protein sequence ID" value="ACM59208.1"/>
    <property type="molecule type" value="Genomic_DNA"/>
</dbReference>
<dbReference type="RefSeq" id="WP_012660718.1">
    <property type="nucleotide sequence ID" value="NC_012034.1"/>
</dbReference>
<dbReference type="SMR" id="B9MLK0"/>
<dbReference type="STRING" id="521460.Athe_0046"/>
<dbReference type="GeneID" id="31771419"/>
<dbReference type="KEGG" id="ate:Athe_0046"/>
<dbReference type="eggNOG" id="COG0104">
    <property type="taxonomic scope" value="Bacteria"/>
</dbReference>
<dbReference type="HOGENOM" id="CLU_029848_0_0_9"/>
<dbReference type="UniPathway" id="UPA00075">
    <property type="reaction ID" value="UER00335"/>
</dbReference>
<dbReference type="Proteomes" id="UP000007723">
    <property type="component" value="Chromosome"/>
</dbReference>
<dbReference type="GO" id="GO:0005737">
    <property type="term" value="C:cytoplasm"/>
    <property type="evidence" value="ECO:0007669"/>
    <property type="project" value="UniProtKB-SubCell"/>
</dbReference>
<dbReference type="GO" id="GO:0004019">
    <property type="term" value="F:adenylosuccinate synthase activity"/>
    <property type="evidence" value="ECO:0007669"/>
    <property type="project" value="UniProtKB-UniRule"/>
</dbReference>
<dbReference type="GO" id="GO:0005525">
    <property type="term" value="F:GTP binding"/>
    <property type="evidence" value="ECO:0007669"/>
    <property type="project" value="UniProtKB-UniRule"/>
</dbReference>
<dbReference type="GO" id="GO:0000287">
    <property type="term" value="F:magnesium ion binding"/>
    <property type="evidence" value="ECO:0007669"/>
    <property type="project" value="UniProtKB-UniRule"/>
</dbReference>
<dbReference type="GO" id="GO:0044208">
    <property type="term" value="P:'de novo' AMP biosynthetic process"/>
    <property type="evidence" value="ECO:0007669"/>
    <property type="project" value="UniProtKB-UniRule"/>
</dbReference>
<dbReference type="GO" id="GO:0046040">
    <property type="term" value="P:IMP metabolic process"/>
    <property type="evidence" value="ECO:0007669"/>
    <property type="project" value="TreeGrafter"/>
</dbReference>
<dbReference type="CDD" id="cd03108">
    <property type="entry name" value="AdSS"/>
    <property type="match status" value="1"/>
</dbReference>
<dbReference type="FunFam" id="1.10.300.10:FF:000001">
    <property type="entry name" value="Adenylosuccinate synthetase"/>
    <property type="match status" value="1"/>
</dbReference>
<dbReference type="FunFam" id="3.90.170.10:FF:000001">
    <property type="entry name" value="Adenylosuccinate synthetase"/>
    <property type="match status" value="1"/>
</dbReference>
<dbReference type="Gene3D" id="3.40.440.10">
    <property type="entry name" value="Adenylosuccinate Synthetase, subunit A, domain 1"/>
    <property type="match status" value="1"/>
</dbReference>
<dbReference type="Gene3D" id="1.10.300.10">
    <property type="entry name" value="Adenylosuccinate Synthetase, subunit A, domain 2"/>
    <property type="match status" value="1"/>
</dbReference>
<dbReference type="Gene3D" id="3.90.170.10">
    <property type="entry name" value="Adenylosuccinate Synthetase, subunit A, domain 3"/>
    <property type="match status" value="1"/>
</dbReference>
<dbReference type="HAMAP" id="MF_00011">
    <property type="entry name" value="Adenylosucc_synth"/>
    <property type="match status" value="1"/>
</dbReference>
<dbReference type="InterPro" id="IPR018220">
    <property type="entry name" value="Adenylosuccin_syn_GTP-bd"/>
</dbReference>
<dbReference type="InterPro" id="IPR033128">
    <property type="entry name" value="Adenylosuccin_syn_Lys_AS"/>
</dbReference>
<dbReference type="InterPro" id="IPR042109">
    <property type="entry name" value="Adenylosuccinate_synth_dom1"/>
</dbReference>
<dbReference type="InterPro" id="IPR042110">
    <property type="entry name" value="Adenylosuccinate_synth_dom2"/>
</dbReference>
<dbReference type="InterPro" id="IPR042111">
    <property type="entry name" value="Adenylosuccinate_synth_dom3"/>
</dbReference>
<dbReference type="InterPro" id="IPR001114">
    <property type="entry name" value="Adenylosuccinate_synthetase"/>
</dbReference>
<dbReference type="InterPro" id="IPR027417">
    <property type="entry name" value="P-loop_NTPase"/>
</dbReference>
<dbReference type="NCBIfam" id="NF002223">
    <property type="entry name" value="PRK01117.1"/>
    <property type="match status" value="1"/>
</dbReference>
<dbReference type="NCBIfam" id="TIGR00184">
    <property type="entry name" value="purA"/>
    <property type="match status" value="1"/>
</dbReference>
<dbReference type="PANTHER" id="PTHR11846">
    <property type="entry name" value="ADENYLOSUCCINATE SYNTHETASE"/>
    <property type="match status" value="1"/>
</dbReference>
<dbReference type="PANTHER" id="PTHR11846:SF0">
    <property type="entry name" value="ADENYLOSUCCINATE SYNTHETASE"/>
    <property type="match status" value="1"/>
</dbReference>
<dbReference type="Pfam" id="PF00709">
    <property type="entry name" value="Adenylsucc_synt"/>
    <property type="match status" value="1"/>
</dbReference>
<dbReference type="SMART" id="SM00788">
    <property type="entry name" value="Adenylsucc_synt"/>
    <property type="match status" value="1"/>
</dbReference>
<dbReference type="SUPFAM" id="SSF52540">
    <property type="entry name" value="P-loop containing nucleoside triphosphate hydrolases"/>
    <property type="match status" value="1"/>
</dbReference>
<dbReference type="PROSITE" id="PS01266">
    <property type="entry name" value="ADENYLOSUCCIN_SYN_1"/>
    <property type="match status" value="1"/>
</dbReference>
<dbReference type="PROSITE" id="PS00513">
    <property type="entry name" value="ADENYLOSUCCIN_SYN_2"/>
    <property type="match status" value="1"/>
</dbReference>
<gene>
    <name evidence="1" type="primary">purA</name>
    <name type="ordered locus">Athe_0046</name>
</gene>
<accession>B9MLK0</accession>